<accession>A9I042</accession>
<evidence type="ECO:0000255" key="1">
    <source>
        <dbReference type="HAMAP-Rule" id="MF_01224"/>
    </source>
</evidence>
<feature type="chain" id="PRO_1000139248" description="Cyclic pyranopterin monophosphate synthase">
    <location>
        <begin position="1"/>
        <end position="162"/>
    </location>
</feature>
<feature type="active site" evidence="1">
    <location>
        <position position="132"/>
    </location>
</feature>
<feature type="binding site" evidence="1">
    <location>
        <begin position="79"/>
        <end position="81"/>
    </location>
    <ligand>
        <name>substrate</name>
    </ligand>
</feature>
<feature type="binding site" evidence="1">
    <location>
        <begin position="117"/>
        <end position="118"/>
    </location>
    <ligand>
        <name>substrate</name>
    </ligand>
</feature>
<sequence>MSSPSPALSHLDESGQIRMVDVGAKSASDRIAIARGAVRMNALAYGLLTQPGQGKGEVLNTARVAAVLAAKRCAELIPLCHSLPLAFVGVDFSLDDATHTVEVRATCRTHYKTGVEMEAMTAASVAALTIYDMCKAADKGIVIEQIRLEYKAGGKSGEWRND</sequence>
<proteinExistence type="inferred from homology"/>
<organism>
    <name type="scientific">Bordetella petrii (strain ATCC BAA-461 / DSM 12804 / CCUG 43448)</name>
    <dbReference type="NCBI Taxonomy" id="340100"/>
    <lineage>
        <taxon>Bacteria</taxon>
        <taxon>Pseudomonadati</taxon>
        <taxon>Pseudomonadota</taxon>
        <taxon>Betaproteobacteria</taxon>
        <taxon>Burkholderiales</taxon>
        <taxon>Alcaligenaceae</taxon>
        <taxon>Bordetella</taxon>
    </lineage>
</organism>
<comment type="function">
    <text evidence="1">Catalyzes the conversion of (8S)-3',8-cyclo-7,8-dihydroguanosine 5'-triphosphate to cyclic pyranopterin monophosphate (cPMP).</text>
</comment>
<comment type="catalytic activity">
    <reaction evidence="1">
        <text>(8S)-3',8-cyclo-7,8-dihydroguanosine 5'-triphosphate = cyclic pyranopterin phosphate + diphosphate</text>
        <dbReference type="Rhea" id="RHEA:49580"/>
        <dbReference type="ChEBI" id="CHEBI:33019"/>
        <dbReference type="ChEBI" id="CHEBI:59648"/>
        <dbReference type="ChEBI" id="CHEBI:131766"/>
        <dbReference type="EC" id="4.6.1.17"/>
    </reaction>
</comment>
<comment type="pathway">
    <text evidence="1">Cofactor biosynthesis; molybdopterin biosynthesis.</text>
</comment>
<comment type="subunit">
    <text evidence="1">Homohexamer; trimer of dimers.</text>
</comment>
<comment type="similarity">
    <text evidence="1">Belongs to the MoaC family.</text>
</comment>
<keyword id="KW-0456">Lyase</keyword>
<keyword id="KW-0501">Molybdenum cofactor biosynthesis</keyword>
<gene>
    <name evidence="1" type="primary">moaC</name>
    <name type="ordered locus">Bpet3669</name>
</gene>
<dbReference type="EC" id="4.6.1.17" evidence="1"/>
<dbReference type="EMBL" id="AM902716">
    <property type="protein sequence ID" value="CAP44012.1"/>
    <property type="molecule type" value="Genomic_DNA"/>
</dbReference>
<dbReference type="SMR" id="A9I042"/>
<dbReference type="STRING" id="94624.Bpet3669"/>
<dbReference type="KEGG" id="bpt:Bpet3669"/>
<dbReference type="eggNOG" id="COG0315">
    <property type="taxonomic scope" value="Bacteria"/>
</dbReference>
<dbReference type="UniPathway" id="UPA00344"/>
<dbReference type="Proteomes" id="UP000001225">
    <property type="component" value="Chromosome"/>
</dbReference>
<dbReference type="GO" id="GO:0061799">
    <property type="term" value="F:cyclic pyranopterin monophosphate synthase activity"/>
    <property type="evidence" value="ECO:0007669"/>
    <property type="project" value="UniProtKB-UniRule"/>
</dbReference>
<dbReference type="GO" id="GO:0006777">
    <property type="term" value="P:Mo-molybdopterin cofactor biosynthetic process"/>
    <property type="evidence" value="ECO:0007669"/>
    <property type="project" value="UniProtKB-UniRule"/>
</dbReference>
<dbReference type="CDD" id="cd01420">
    <property type="entry name" value="MoaC_PE"/>
    <property type="match status" value="1"/>
</dbReference>
<dbReference type="Gene3D" id="3.30.70.640">
    <property type="entry name" value="Molybdopterin cofactor biosynthesis C (MoaC) domain"/>
    <property type="match status" value="1"/>
</dbReference>
<dbReference type="HAMAP" id="MF_01224_B">
    <property type="entry name" value="MoaC_B"/>
    <property type="match status" value="1"/>
</dbReference>
<dbReference type="InterPro" id="IPR023045">
    <property type="entry name" value="MoaC"/>
</dbReference>
<dbReference type="InterPro" id="IPR047594">
    <property type="entry name" value="MoaC_bact/euk"/>
</dbReference>
<dbReference type="InterPro" id="IPR036522">
    <property type="entry name" value="MoaC_sf"/>
</dbReference>
<dbReference type="InterPro" id="IPR050105">
    <property type="entry name" value="MoCo_biosynth_MoaA/MoaC"/>
</dbReference>
<dbReference type="InterPro" id="IPR002820">
    <property type="entry name" value="Mopterin_CF_biosynth-C_dom"/>
</dbReference>
<dbReference type="NCBIfam" id="TIGR00581">
    <property type="entry name" value="moaC"/>
    <property type="match status" value="1"/>
</dbReference>
<dbReference type="NCBIfam" id="NF006870">
    <property type="entry name" value="PRK09364.1"/>
    <property type="match status" value="1"/>
</dbReference>
<dbReference type="PANTHER" id="PTHR22960:SF29">
    <property type="entry name" value="CYCLIC PYRANOPTERIN MONOPHOSPHATE SYNTHASE"/>
    <property type="match status" value="1"/>
</dbReference>
<dbReference type="PANTHER" id="PTHR22960">
    <property type="entry name" value="MOLYBDOPTERIN COFACTOR SYNTHESIS PROTEIN A"/>
    <property type="match status" value="1"/>
</dbReference>
<dbReference type="Pfam" id="PF01967">
    <property type="entry name" value="MoaC"/>
    <property type="match status" value="1"/>
</dbReference>
<dbReference type="SUPFAM" id="SSF55040">
    <property type="entry name" value="Molybdenum cofactor biosynthesis protein C, MoaC"/>
    <property type="match status" value="1"/>
</dbReference>
<name>MOAC_BORPD</name>
<reference key="1">
    <citation type="journal article" date="2008" name="BMC Genomics">
        <title>The missing link: Bordetella petrii is endowed with both the metabolic versatility of environmental bacteria and virulence traits of pathogenic Bordetellae.</title>
        <authorList>
            <person name="Gross R."/>
            <person name="Guzman C.A."/>
            <person name="Sebaihia M."/>
            <person name="Martin dos Santos V.A.P."/>
            <person name="Pieper D.H."/>
            <person name="Koebnik R."/>
            <person name="Lechner M."/>
            <person name="Bartels D."/>
            <person name="Buhrmester J."/>
            <person name="Choudhuri J.V."/>
            <person name="Ebensen T."/>
            <person name="Gaigalat L."/>
            <person name="Herrmann S."/>
            <person name="Khachane A.N."/>
            <person name="Larisch C."/>
            <person name="Link S."/>
            <person name="Linke B."/>
            <person name="Meyer F."/>
            <person name="Mormann S."/>
            <person name="Nakunst D."/>
            <person name="Rueckert C."/>
            <person name="Schneiker-Bekel S."/>
            <person name="Schulze K."/>
            <person name="Voerholter F.-J."/>
            <person name="Yevsa T."/>
            <person name="Engle J.T."/>
            <person name="Goldman W.E."/>
            <person name="Puehler A."/>
            <person name="Goebel U.B."/>
            <person name="Goesmann A."/>
            <person name="Bloecker H."/>
            <person name="Kaiser O."/>
            <person name="Martinez-Arias R."/>
        </authorList>
    </citation>
    <scope>NUCLEOTIDE SEQUENCE [LARGE SCALE GENOMIC DNA]</scope>
    <source>
        <strain>ATCC BAA-461 / DSM 12804 / CCUG 43448</strain>
    </source>
</reference>
<protein>
    <recommendedName>
        <fullName evidence="1">Cyclic pyranopterin monophosphate synthase</fullName>
        <ecNumber evidence="1">4.6.1.17</ecNumber>
    </recommendedName>
    <alternativeName>
        <fullName evidence="1">Molybdenum cofactor biosynthesis protein C</fullName>
    </alternativeName>
</protein>